<feature type="chain" id="PRO_1000050392" description="Cytochrome b6-f complex subunit 5">
    <location>
        <begin position="1"/>
        <end position="39"/>
    </location>
</feature>
<feature type="transmembrane region" description="Helical" evidence="1">
    <location>
        <begin position="5"/>
        <end position="25"/>
    </location>
</feature>
<protein>
    <recommendedName>
        <fullName evidence="1">Cytochrome b6-f complex subunit 5</fullName>
    </recommendedName>
    <alternativeName>
        <fullName evidence="1">Cytochrome b6-f complex subunit PetG</fullName>
    </alternativeName>
    <alternativeName>
        <fullName evidence="1">Cytochrome b6-f complex subunit V</fullName>
    </alternativeName>
</protein>
<evidence type="ECO:0000255" key="1">
    <source>
        <dbReference type="HAMAP-Rule" id="MF_00432"/>
    </source>
</evidence>
<organism>
    <name type="scientific">Prochlorococcus marinus (strain NATL1A)</name>
    <dbReference type="NCBI Taxonomy" id="167555"/>
    <lineage>
        <taxon>Bacteria</taxon>
        <taxon>Bacillati</taxon>
        <taxon>Cyanobacteriota</taxon>
        <taxon>Cyanophyceae</taxon>
        <taxon>Synechococcales</taxon>
        <taxon>Prochlorococcaceae</taxon>
        <taxon>Prochlorococcus</taxon>
    </lineage>
</organism>
<dbReference type="EMBL" id="CP000553">
    <property type="protein sequence ID" value="ABM76085.1"/>
    <property type="molecule type" value="Genomic_DNA"/>
</dbReference>
<dbReference type="RefSeq" id="WP_011824105.1">
    <property type="nucleotide sequence ID" value="NC_008819.1"/>
</dbReference>
<dbReference type="SMR" id="A2C3M5"/>
<dbReference type="KEGG" id="pme:NATL1_15281"/>
<dbReference type="HOGENOM" id="CLU_216962_0_0_3"/>
<dbReference type="Proteomes" id="UP000002592">
    <property type="component" value="Chromosome"/>
</dbReference>
<dbReference type="GO" id="GO:0009512">
    <property type="term" value="C:cytochrome b6f complex"/>
    <property type="evidence" value="ECO:0007669"/>
    <property type="project" value="InterPro"/>
</dbReference>
<dbReference type="GO" id="GO:0031676">
    <property type="term" value="C:plasma membrane-derived thylakoid membrane"/>
    <property type="evidence" value="ECO:0007669"/>
    <property type="project" value="UniProtKB-SubCell"/>
</dbReference>
<dbReference type="GO" id="GO:0045158">
    <property type="term" value="F:electron transporter, transferring electrons within cytochrome b6/f complex of photosystem II activity"/>
    <property type="evidence" value="ECO:0007669"/>
    <property type="project" value="UniProtKB-UniRule"/>
</dbReference>
<dbReference type="GO" id="GO:0017004">
    <property type="term" value="P:cytochrome complex assembly"/>
    <property type="evidence" value="ECO:0007669"/>
    <property type="project" value="UniProtKB-UniRule"/>
</dbReference>
<dbReference type="GO" id="GO:0015979">
    <property type="term" value="P:photosynthesis"/>
    <property type="evidence" value="ECO:0007669"/>
    <property type="project" value="UniProtKB-KW"/>
</dbReference>
<dbReference type="HAMAP" id="MF_00432">
    <property type="entry name" value="Cytb6_f_PetG"/>
    <property type="match status" value="1"/>
</dbReference>
<dbReference type="InterPro" id="IPR003683">
    <property type="entry name" value="Cyt_6/f_cplx_su5"/>
</dbReference>
<dbReference type="InterPro" id="IPR036099">
    <property type="entry name" value="Cyt_6/f_cplx_su5_sf"/>
</dbReference>
<dbReference type="NCBIfam" id="NF001907">
    <property type="entry name" value="PRK00665.1"/>
    <property type="match status" value="1"/>
</dbReference>
<dbReference type="Pfam" id="PF02529">
    <property type="entry name" value="PetG"/>
    <property type="match status" value="1"/>
</dbReference>
<dbReference type="PIRSF" id="PIRSF000034">
    <property type="entry name" value="Cyt_b6-f_V"/>
    <property type="match status" value="1"/>
</dbReference>
<dbReference type="SUPFAM" id="SSF103446">
    <property type="entry name" value="PetG subunit of the cytochrome b6f complex"/>
    <property type="match status" value="1"/>
</dbReference>
<reference key="1">
    <citation type="journal article" date="2007" name="PLoS Genet.">
        <title>Patterns and implications of gene gain and loss in the evolution of Prochlorococcus.</title>
        <authorList>
            <person name="Kettler G.C."/>
            <person name="Martiny A.C."/>
            <person name="Huang K."/>
            <person name="Zucker J."/>
            <person name="Coleman M.L."/>
            <person name="Rodrigue S."/>
            <person name="Chen F."/>
            <person name="Lapidus A."/>
            <person name="Ferriera S."/>
            <person name="Johnson J."/>
            <person name="Steglich C."/>
            <person name="Church G.M."/>
            <person name="Richardson P."/>
            <person name="Chisholm S.W."/>
        </authorList>
    </citation>
    <scope>NUCLEOTIDE SEQUENCE [LARGE SCALE GENOMIC DNA]</scope>
    <source>
        <strain>NATL1A</strain>
    </source>
</reference>
<comment type="function">
    <text evidence="1">Component of the cytochrome b6-f complex, which mediates electron transfer between photosystem II (PSII) and photosystem I (PSI), cyclic electron flow around PSI, and state transitions. PetG is required for either the stability or assembly of the cytochrome b6-f complex.</text>
</comment>
<comment type="subunit">
    <text evidence="1">The 4 large subunits of the cytochrome b6-f complex are cytochrome b6, subunit IV (17 kDa polypeptide, PetD), cytochrome f and the Rieske protein, while the 4 small subunits are PetG, PetL, PetM and PetN. The complex functions as a dimer.</text>
</comment>
<comment type="subcellular location">
    <subcellularLocation>
        <location evidence="1">Cellular thylakoid membrane</location>
        <topology evidence="1">Single-pass membrane protein</topology>
    </subcellularLocation>
</comment>
<comment type="similarity">
    <text evidence="1">Belongs to the PetG family.</text>
</comment>
<name>PETG_PROM1</name>
<proteinExistence type="inferred from homology"/>
<gene>
    <name evidence="1" type="primary">petG</name>
    <name type="ordered locus">NATL1_15281</name>
</gene>
<keyword id="KW-0249">Electron transport</keyword>
<keyword id="KW-0472">Membrane</keyword>
<keyword id="KW-0602">Photosynthesis</keyword>
<keyword id="KW-0793">Thylakoid</keyword>
<keyword id="KW-0812">Transmembrane</keyword>
<keyword id="KW-1133">Transmembrane helix</keyword>
<keyword id="KW-0813">Transport</keyword>
<accession>A2C3M5</accession>
<sequence>MIEPLLCGIVLGLVPVTLLGLFVSAWNQYRRSSSMPDWE</sequence>